<keyword id="KW-0378">Hydrolase</keyword>
<keyword id="KW-1185">Reference proteome</keyword>
<dbReference type="EC" id="3.5.1.2" evidence="1"/>
<dbReference type="EMBL" id="CR954246">
    <property type="protein sequence ID" value="CAI87391.1"/>
    <property type="molecule type" value="Genomic_DNA"/>
</dbReference>
<dbReference type="SMR" id="Q3IHY7"/>
<dbReference type="STRING" id="326442.PSHAa2335"/>
<dbReference type="KEGG" id="pha:PSHAa2335"/>
<dbReference type="eggNOG" id="COG2066">
    <property type="taxonomic scope" value="Bacteria"/>
</dbReference>
<dbReference type="HOGENOM" id="CLU_027932_1_1_6"/>
<dbReference type="BioCyc" id="PHAL326442:PSHA_RS11515-MONOMER"/>
<dbReference type="Proteomes" id="UP000006843">
    <property type="component" value="Chromosome I"/>
</dbReference>
<dbReference type="GO" id="GO:0004359">
    <property type="term" value="F:glutaminase activity"/>
    <property type="evidence" value="ECO:0007669"/>
    <property type="project" value="UniProtKB-UniRule"/>
</dbReference>
<dbReference type="GO" id="GO:0006537">
    <property type="term" value="P:glutamate biosynthetic process"/>
    <property type="evidence" value="ECO:0007669"/>
    <property type="project" value="TreeGrafter"/>
</dbReference>
<dbReference type="GO" id="GO:0006543">
    <property type="term" value="P:glutamine catabolic process"/>
    <property type="evidence" value="ECO:0007669"/>
    <property type="project" value="TreeGrafter"/>
</dbReference>
<dbReference type="FunFam" id="3.40.710.10:FF:000005">
    <property type="entry name" value="Glutaminase"/>
    <property type="match status" value="1"/>
</dbReference>
<dbReference type="Gene3D" id="3.40.710.10">
    <property type="entry name" value="DD-peptidase/beta-lactamase superfamily"/>
    <property type="match status" value="1"/>
</dbReference>
<dbReference type="HAMAP" id="MF_00313">
    <property type="entry name" value="Glutaminase"/>
    <property type="match status" value="1"/>
</dbReference>
<dbReference type="InterPro" id="IPR012338">
    <property type="entry name" value="Beta-lactam/transpept-like"/>
</dbReference>
<dbReference type="InterPro" id="IPR015868">
    <property type="entry name" value="Glutaminase"/>
</dbReference>
<dbReference type="NCBIfam" id="TIGR03814">
    <property type="entry name" value="Gln_ase"/>
    <property type="match status" value="1"/>
</dbReference>
<dbReference type="NCBIfam" id="NF002132">
    <property type="entry name" value="PRK00971.1-1"/>
    <property type="match status" value="1"/>
</dbReference>
<dbReference type="NCBIfam" id="NF002133">
    <property type="entry name" value="PRK00971.1-2"/>
    <property type="match status" value="1"/>
</dbReference>
<dbReference type="PANTHER" id="PTHR12544">
    <property type="entry name" value="GLUTAMINASE"/>
    <property type="match status" value="1"/>
</dbReference>
<dbReference type="PANTHER" id="PTHR12544:SF29">
    <property type="entry name" value="GLUTAMINASE"/>
    <property type="match status" value="1"/>
</dbReference>
<dbReference type="Pfam" id="PF04960">
    <property type="entry name" value="Glutaminase"/>
    <property type="match status" value="1"/>
</dbReference>
<dbReference type="SUPFAM" id="SSF56601">
    <property type="entry name" value="beta-lactamase/transpeptidase-like"/>
    <property type="match status" value="1"/>
</dbReference>
<sequence>MPTTDYQQVLNDITQEVAPLLSQGKVADYIPALAEVDPEQFSIAIYTTSGETFCAGDCTQQFTIQSVSKVMTLTLALQRYGDELWHRVGKEPSGTAFNSLTQLEFEKGIPRNPFINAGAIVTCDALYSRLSAPMHTMLETFRALSGNRCIAIDKKVANSEYEFRHRNAAMGHLMKSFGNFENEVDDVLWAYFNFCAIELNCIELAKAYNFLANNGIDNTSGKRVLPSRQTKQLNSLLFTSGLYDAAGDFGYRVGMPGKSGVSGTVLAVLPNKFTVAVWSPGLNSFGNSVAGIAALELLSKKLDISIF</sequence>
<protein>
    <recommendedName>
        <fullName evidence="1">Glutaminase</fullName>
        <ecNumber evidence="1">3.5.1.2</ecNumber>
    </recommendedName>
</protein>
<feature type="chain" id="PRO_0000336034" description="Glutaminase">
    <location>
        <begin position="1"/>
        <end position="307"/>
    </location>
</feature>
<feature type="binding site" evidence="1">
    <location>
        <position position="66"/>
    </location>
    <ligand>
        <name>substrate</name>
    </ligand>
</feature>
<feature type="binding site" evidence="1">
    <location>
        <position position="116"/>
    </location>
    <ligand>
        <name>substrate</name>
    </ligand>
</feature>
<feature type="binding site" evidence="1">
    <location>
        <position position="160"/>
    </location>
    <ligand>
        <name>substrate</name>
    </ligand>
</feature>
<feature type="binding site" evidence="1">
    <location>
        <position position="167"/>
    </location>
    <ligand>
        <name>substrate</name>
    </ligand>
</feature>
<feature type="binding site" evidence="1">
    <location>
        <position position="191"/>
    </location>
    <ligand>
        <name>substrate</name>
    </ligand>
</feature>
<feature type="binding site" evidence="1">
    <location>
        <position position="243"/>
    </location>
    <ligand>
        <name>substrate</name>
    </ligand>
</feature>
<feature type="binding site" evidence="1">
    <location>
        <position position="261"/>
    </location>
    <ligand>
        <name>substrate</name>
    </ligand>
</feature>
<name>GLSA_PSET1</name>
<accession>Q3IHY7</accession>
<reference key="1">
    <citation type="journal article" date="2005" name="Genome Res.">
        <title>Coping with cold: the genome of the versatile marine Antarctica bacterium Pseudoalteromonas haloplanktis TAC125.</title>
        <authorList>
            <person name="Medigue C."/>
            <person name="Krin E."/>
            <person name="Pascal G."/>
            <person name="Barbe V."/>
            <person name="Bernsel A."/>
            <person name="Bertin P.N."/>
            <person name="Cheung F."/>
            <person name="Cruveiller S."/>
            <person name="D'Amico S."/>
            <person name="Duilio A."/>
            <person name="Fang G."/>
            <person name="Feller G."/>
            <person name="Ho C."/>
            <person name="Mangenot S."/>
            <person name="Marino G."/>
            <person name="Nilsson J."/>
            <person name="Parrilli E."/>
            <person name="Rocha E.P.C."/>
            <person name="Rouy Z."/>
            <person name="Sekowska A."/>
            <person name="Tutino M.L."/>
            <person name="Vallenet D."/>
            <person name="von Heijne G."/>
            <person name="Danchin A."/>
        </authorList>
    </citation>
    <scope>NUCLEOTIDE SEQUENCE [LARGE SCALE GENOMIC DNA]</scope>
    <source>
        <strain>TAC 125</strain>
    </source>
</reference>
<evidence type="ECO:0000255" key="1">
    <source>
        <dbReference type="HAMAP-Rule" id="MF_00313"/>
    </source>
</evidence>
<gene>
    <name evidence="1" type="primary">glsA</name>
    <name type="ordered locus">PSHAa2335</name>
</gene>
<comment type="catalytic activity">
    <reaction evidence="1">
        <text>L-glutamine + H2O = L-glutamate + NH4(+)</text>
        <dbReference type="Rhea" id="RHEA:15889"/>
        <dbReference type="ChEBI" id="CHEBI:15377"/>
        <dbReference type="ChEBI" id="CHEBI:28938"/>
        <dbReference type="ChEBI" id="CHEBI:29985"/>
        <dbReference type="ChEBI" id="CHEBI:58359"/>
        <dbReference type="EC" id="3.5.1.2"/>
    </reaction>
</comment>
<comment type="subunit">
    <text evidence="1">Homotetramer.</text>
</comment>
<comment type="similarity">
    <text evidence="1">Belongs to the glutaminase family.</text>
</comment>
<organism>
    <name type="scientific">Pseudoalteromonas translucida (strain TAC 125)</name>
    <dbReference type="NCBI Taxonomy" id="326442"/>
    <lineage>
        <taxon>Bacteria</taxon>
        <taxon>Pseudomonadati</taxon>
        <taxon>Pseudomonadota</taxon>
        <taxon>Gammaproteobacteria</taxon>
        <taxon>Alteromonadales</taxon>
        <taxon>Pseudoalteromonadaceae</taxon>
        <taxon>Pseudoalteromonas</taxon>
    </lineage>
</organism>
<proteinExistence type="inferred from homology"/>